<proteinExistence type="inferred from homology"/>
<comment type="function">
    <text evidence="1">Phosphorylation of dTMP to form dTDP in both de novo and salvage pathways of dTTP synthesis.</text>
</comment>
<comment type="catalytic activity">
    <reaction evidence="1">
        <text>dTMP + ATP = dTDP + ADP</text>
        <dbReference type="Rhea" id="RHEA:13517"/>
        <dbReference type="ChEBI" id="CHEBI:30616"/>
        <dbReference type="ChEBI" id="CHEBI:58369"/>
        <dbReference type="ChEBI" id="CHEBI:63528"/>
        <dbReference type="ChEBI" id="CHEBI:456216"/>
        <dbReference type="EC" id="2.7.4.9"/>
    </reaction>
</comment>
<comment type="similarity">
    <text evidence="1">Belongs to the thymidylate kinase family.</text>
</comment>
<name>KTHY_PHOPR</name>
<evidence type="ECO:0000255" key="1">
    <source>
        <dbReference type="HAMAP-Rule" id="MF_00165"/>
    </source>
</evidence>
<reference key="1">
    <citation type="journal article" date="2005" name="Science">
        <title>Life at depth: Photobacterium profundum genome sequence and expression analysis.</title>
        <authorList>
            <person name="Vezzi A."/>
            <person name="Campanaro S."/>
            <person name="D'Angelo M."/>
            <person name="Simonato F."/>
            <person name="Vitulo N."/>
            <person name="Lauro F.M."/>
            <person name="Cestaro A."/>
            <person name="Malacrida G."/>
            <person name="Simionati B."/>
            <person name="Cannata N."/>
            <person name="Romualdi C."/>
            <person name="Bartlett D.H."/>
            <person name="Valle G."/>
        </authorList>
    </citation>
    <scope>NUCLEOTIDE SEQUENCE [LARGE SCALE GENOMIC DNA]</scope>
    <source>
        <strain>ATCC BAA-1253 / SS9</strain>
    </source>
</reference>
<keyword id="KW-0067">ATP-binding</keyword>
<keyword id="KW-0418">Kinase</keyword>
<keyword id="KW-0545">Nucleotide biosynthesis</keyword>
<keyword id="KW-0547">Nucleotide-binding</keyword>
<keyword id="KW-1185">Reference proteome</keyword>
<keyword id="KW-0808">Transferase</keyword>
<dbReference type="EC" id="2.7.4.9" evidence="1"/>
<dbReference type="EMBL" id="CR378666">
    <property type="protein sequence ID" value="CAG19611.1"/>
    <property type="molecule type" value="Genomic_DNA"/>
</dbReference>
<dbReference type="RefSeq" id="WP_011217941.1">
    <property type="nucleotide sequence ID" value="NC_006370.1"/>
</dbReference>
<dbReference type="SMR" id="Q6LSW5"/>
<dbReference type="STRING" id="298386.PBPRA1200"/>
<dbReference type="KEGG" id="ppr:PBPRA1200"/>
<dbReference type="eggNOG" id="COG0125">
    <property type="taxonomic scope" value="Bacteria"/>
</dbReference>
<dbReference type="HOGENOM" id="CLU_049131_0_1_6"/>
<dbReference type="Proteomes" id="UP000000593">
    <property type="component" value="Chromosome 1"/>
</dbReference>
<dbReference type="GO" id="GO:0005829">
    <property type="term" value="C:cytosol"/>
    <property type="evidence" value="ECO:0007669"/>
    <property type="project" value="TreeGrafter"/>
</dbReference>
<dbReference type="GO" id="GO:0005524">
    <property type="term" value="F:ATP binding"/>
    <property type="evidence" value="ECO:0007669"/>
    <property type="project" value="UniProtKB-UniRule"/>
</dbReference>
<dbReference type="GO" id="GO:0004798">
    <property type="term" value="F:dTMP kinase activity"/>
    <property type="evidence" value="ECO:0007669"/>
    <property type="project" value="UniProtKB-UniRule"/>
</dbReference>
<dbReference type="GO" id="GO:0006233">
    <property type="term" value="P:dTDP biosynthetic process"/>
    <property type="evidence" value="ECO:0007669"/>
    <property type="project" value="InterPro"/>
</dbReference>
<dbReference type="GO" id="GO:0006235">
    <property type="term" value="P:dTTP biosynthetic process"/>
    <property type="evidence" value="ECO:0007669"/>
    <property type="project" value="UniProtKB-UniRule"/>
</dbReference>
<dbReference type="GO" id="GO:0006227">
    <property type="term" value="P:dUDP biosynthetic process"/>
    <property type="evidence" value="ECO:0007669"/>
    <property type="project" value="TreeGrafter"/>
</dbReference>
<dbReference type="CDD" id="cd01672">
    <property type="entry name" value="TMPK"/>
    <property type="match status" value="1"/>
</dbReference>
<dbReference type="FunFam" id="3.40.50.300:FF:000321">
    <property type="entry name" value="Thymidylate kinase"/>
    <property type="match status" value="1"/>
</dbReference>
<dbReference type="Gene3D" id="3.40.50.300">
    <property type="entry name" value="P-loop containing nucleotide triphosphate hydrolases"/>
    <property type="match status" value="1"/>
</dbReference>
<dbReference type="HAMAP" id="MF_00165">
    <property type="entry name" value="Thymidylate_kinase"/>
    <property type="match status" value="1"/>
</dbReference>
<dbReference type="InterPro" id="IPR027417">
    <property type="entry name" value="P-loop_NTPase"/>
</dbReference>
<dbReference type="InterPro" id="IPR039430">
    <property type="entry name" value="Thymidylate_kin-like_dom"/>
</dbReference>
<dbReference type="InterPro" id="IPR018095">
    <property type="entry name" value="Thymidylate_kin_CS"/>
</dbReference>
<dbReference type="InterPro" id="IPR018094">
    <property type="entry name" value="Thymidylate_kinase"/>
</dbReference>
<dbReference type="NCBIfam" id="TIGR00041">
    <property type="entry name" value="DTMP_kinase"/>
    <property type="match status" value="1"/>
</dbReference>
<dbReference type="PANTHER" id="PTHR10344">
    <property type="entry name" value="THYMIDYLATE KINASE"/>
    <property type="match status" value="1"/>
</dbReference>
<dbReference type="PANTHER" id="PTHR10344:SF4">
    <property type="entry name" value="UMP-CMP KINASE 2, MITOCHONDRIAL"/>
    <property type="match status" value="1"/>
</dbReference>
<dbReference type="Pfam" id="PF02223">
    <property type="entry name" value="Thymidylate_kin"/>
    <property type="match status" value="1"/>
</dbReference>
<dbReference type="SUPFAM" id="SSF52540">
    <property type="entry name" value="P-loop containing nucleoside triphosphate hydrolases"/>
    <property type="match status" value="1"/>
</dbReference>
<dbReference type="PROSITE" id="PS01331">
    <property type="entry name" value="THYMIDYLATE_KINASE"/>
    <property type="match status" value="1"/>
</dbReference>
<accession>Q6LSW5</accession>
<sequence>MTAKFIVIEGLEGAGKSTAIQQVIDALAAHGIENPESTREPGGTPLAEQMRALIKEGHPDEPLTDMAELLLLYAARIQLVDNIIKPALAEGRWVVGDRHDMSSQAYQGGGRGFDKALMENLRDTVLGDFCPDLTIYMDIDPILGLERARGRGELDRIEKMNVDFFHRARARFLELSENNPKVIIIDAGQSLENVTSDLKQALNHWLEKQ</sequence>
<protein>
    <recommendedName>
        <fullName evidence="1">Thymidylate kinase</fullName>
        <ecNumber evidence="1">2.7.4.9</ecNumber>
    </recommendedName>
    <alternativeName>
        <fullName evidence="1">dTMP kinase</fullName>
    </alternativeName>
</protein>
<organism>
    <name type="scientific">Photobacterium profundum (strain SS9)</name>
    <dbReference type="NCBI Taxonomy" id="298386"/>
    <lineage>
        <taxon>Bacteria</taxon>
        <taxon>Pseudomonadati</taxon>
        <taxon>Pseudomonadota</taxon>
        <taxon>Gammaproteobacteria</taxon>
        <taxon>Vibrionales</taxon>
        <taxon>Vibrionaceae</taxon>
        <taxon>Photobacterium</taxon>
    </lineage>
</organism>
<feature type="chain" id="PRO_0000155319" description="Thymidylate kinase">
    <location>
        <begin position="1"/>
        <end position="209"/>
    </location>
</feature>
<feature type="binding site" evidence="1">
    <location>
        <begin position="10"/>
        <end position="17"/>
    </location>
    <ligand>
        <name>ATP</name>
        <dbReference type="ChEBI" id="CHEBI:30616"/>
    </ligand>
</feature>
<gene>
    <name evidence="1" type="primary">tmk</name>
    <name type="ordered locus">PBPRA1200</name>
</gene>